<dbReference type="EMBL" id="AF084088">
    <property type="protein sequence ID" value="AAD54465.1"/>
    <property type="molecule type" value="Genomic_DNA"/>
</dbReference>
<dbReference type="SMR" id="Q9TDK2"/>
<dbReference type="GO" id="GO:0005743">
    <property type="term" value="C:mitochondrial inner membrane"/>
    <property type="evidence" value="ECO:0007669"/>
    <property type="project" value="UniProtKB-SubCell"/>
</dbReference>
<dbReference type="GO" id="GO:0045275">
    <property type="term" value="C:respiratory chain complex III"/>
    <property type="evidence" value="ECO:0007669"/>
    <property type="project" value="InterPro"/>
</dbReference>
<dbReference type="GO" id="GO:0046872">
    <property type="term" value="F:metal ion binding"/>
    <property type="evidence" value="ECO:0007669"/>
    <property type="project" value="UniProtKB-KW"/>
</dbReference>
<dbReference type="GO" id="GO:0008121">
    <property type="term" value="F:ubiquinol-cytochrome-c reductase activity"/>
    <property type="evidence" value="ECO:0007669"/>
    <property type="project" value="InterPro"/>
</dbReference>
<dbReference type="GO" id="GO:0006122">
    <property type="term" value="P:mitochondrial electron transport, ubiquinol to cytochrome c"/>
    <property type="evidence" value="ECO:0007669"/>
    <property type="project" value="TreeGrafter"/>
</dbReference>
<dbReference type="CDD" id="cd00290">
    <property type="entry name" value="cytochrome_b_C"/>
    <property type="match status" value="1"/>
</dbReference>
<dbReference type="CDD" id="cd00284">
    <property type="entry name" value="Cytochrome_b_N"/>
    <property type="match status" value="1"/>
</dbReference>
<dbReference type="FunFam" id="1.20.810.10:FF:000002">
    <property type="entry name" value="Cytochrome b"/>
    <property type="match status" value="1"/>
</dbReference>
<dbReference type="Gene3D" id="1.20.810.10">
    <property type="entry name" value="Cytochrome Bc1 Complex, Chain C"/>
    <property type="match status" value="1"/>
</dbReference>
<dbReference type="InterPro" id="IPR005798">
    <property type="entry name" value="Cyt_b/b6_C"/>
</dbReference>
<dbReference type="InterPro" id="IPR036150">
    <property type="entry name" value="Cyt_b/b6_C_sf"/>
</dbReference>
<dbReference type="InterPro" id="IPR005797">
    <property type="entry name" value="Cyt_b/b6_N"/>
</dbReference>
<dbReference type="InterPro" id="IPR027387">
    <property type="entry name" value="Cytb/b6-like_sf"/>
</dbReference>
<dbReference type="InterPro" id="IPR030689">
    <property type="entry name" value="Cytochrome_b"/>
</dbReference>
<dbReference type="InterPro" id="IPR048260">
    <property type="entry name" value="Cytochrome_b_C_euk/bac"/>
</dbReference>
<dbReference type="InterPro" id="IPR048259">
    <property type="entry name" value="Cytochrome_b_N_euk/bac"/>
</dbReference>
<dbReference type="InterPro" id="IPR016174">
    <property type="entry name" value="Di-haem_cyt_TM"/>
</dbReference>
<dbReference type="PANTHER" id="PTHR19271">
    <property type="entry name" value="CYTOCHROME B"/>
    <property type="match status" value="1"/>
</dbReference>
<dbReference type="PANTHER" id="PTHR19271:SF16">
    <property type="entry name" value="CYTOCHROME B"/>
    <property type="match status" value="1"/>
</dbReference>
<dbReference type="Pfam" id="PF00032">
    <property type="entry name" value="Cytochrom_B_C"/>
    <property type="match status" value="1"/>
</dbReference>
<dbReference type="Pfam" id="PF00033">
    <property type="entry name" value="Cytochrome_B"/>
    <property type="match status" value="1"/>
</dbReference>
<dbReference type="PIRSF" id="PIRSF038885">
    <property type="entry name" value="COB"/>
    <property type="match status" value="1"/>
</dbReference>
<dbReference type="SUPFAM" id="SSF81648">
    <property type="entry name" value="a domain/subunit of cytochrome bc1 complex (Ubiquinol-cytochrome c reductase)"/>
    <property type="match status" value="1"/>
</dbReference>
<dbReference type="SUPFAM" id="SSF81342">
    <property type="entry name" value="Transmembrane di-heme cytochromes"/>
    <property type="match status" value="1"/>
</dbReference>
<dbReference type="PROSITE" id="PS51003">
    <property type="entry name" value="CYTB_CTER"/>
    <property type="match status" value="1"/>
</dbReference>
<dbReference type="PROSITE" id="PS51002">
    <property type="entry name" value="CYTB_NTER"/>
    <property type="match status" value="1"/>
</dbReference>
<reference key="1">
    <citation type="journal article" date="1999" name="Mar. Mamm. Sci.">
        <title>Phylogenetic relationships among the delphinid cetaceans based on full cytochrome b sequences.</title>
        <authorList>
            <person name="LeDuc R.G."/>
            <person name="Perrin W.F."/>
            <person name="Dizon A.E."/>
        </authorList>
    </citation>
    <scope>NUCLEOTIDE SEQUENCE [GENOMIC DNA]</scope>
</reference>
<keyword id="KW-0249">Electron transport</keyword>
<keyword id="KW-0349">Heme</keyword>
<keyword id="KW-0408">Iron</keyword>
<keyword id="KW-0472">Membrane</keyword>
<keyword id="KW-0479">Metal-binding</keyword>
<keyword id="KW-0496">Mitochondrion</keyword>
<keyword id="KW-0999">Mitochondrion inner membrane</keyword>
<keyword id="KW-0679">Respiratory chain</keyword>
<keyword id="KW-0812">Transmembrane</keyword>
<keyword id="KW-1133">Transmembrane helix</keyword>
<keyword id="KW-0813">Transport</keyword>
<keyword id="KW-0830">Ubiquinone</keyword>
<name>CYB_DELCT</name>
<accession>Q9TDK2</accession>
<gene>
    <name type="primary">MT-CYB</name>
    <name type="synonym">COB</name>
    <name type="synonym">CYTB</name>
    <name type="synonym">MTCYB</name>
</gene>
<proteinExistence type="inferred from homology"/>
<feature type="chain" id="PRO_0000060878" description="Cytochrome b">
    <location>
        <begin position="1"/>
        <end position="379"/>
    </location>
</feature>
<feature type="transmembrane region" description="Helical" evidence="2">
    <location>
        <begin position="33"/>
        <end position="53"/>
    </location>
</feature>
<feature type="transmembrane region" description="Helical" evidence="2">
    <location>
        <begin position="77"/>
        <end position="98"/>
    </location>
</feature>
<feature type="transmembrane region" description="Helical" evidence="2">
    <location>
        <begin position="113"/>
        <end position="133"/>
    </location>
</feature>
<feature type="transmembrane region" description="Helical" evidence="2">
    <location>
        <begin position="178"/>
        <end position="198"/>
    </location>
</feature>
<feature type="transmembrane region" description="Helical" evidence="2">
    <location>
        <begin position="226"/>
        <end position="246"/>
    </location>
</feature>
<feature type="transmembrane region" description="Helical" evidence="2">
    <location>
        <begin position="288"/>
        <end position="308"/>
    </location>
</feature>
<feature type="transmembrane region" description="Helical" evidence="2">
    <location>
        <begin position="320"/>
        <end position="340"/>
    </location>
</feature>
<feature type="transmembrane region" description="Helical" evidence="2">
    <location>
        <begin position="347"/>
        <end position="367"/>
    </location>
</feature>
<feature type="binding site" description="axial binding residue" evidence="2">
    <location>
        <position position="83"/>
    </location>
    <ligand>
        <name>heme b</name>
        <dbReference type="ChEBI" id="CHEBI:60344"/>
        <label>b562</label>
    </ligand>
    <ligandPart>
        <name>Fe</name>
        <dbReference type="ChEBI" id="CHEBI:18248"/>
    </ligandPart>
</feature>
<feature type="binding site" description="axial binding residue" evidence="2">
    <location>
        <position position="97"/>
    </location>
    <ligand>
        <name>heme b</name>
        <dbReference type="ChEBI" id="CHEBI:60344"/>
        <label>b566</label>
    </ligand>
    <ligandPart>
        <name>Fe</name>
        <dbReference type="ChEBI" id="CHEBI:18248"/>
    </ligandPart>
</feature>
<feature type="binding site" description="axial binding residue" evidence="2">
    <location>
        <position position="182"/>
    </location>
    <ligand>
        <name>heme b</name>
        <dbReference type="ChEBI" id="CHEBI:60344"/>
        <label>b562</label>
    </ligand>
    <ligandPart>
        <name>Fe</name>
        <dbReference type="ChEBI" id="CHEBI:18248"/>
    </ligandPart>
</feature>
<feature type="binding site" description="axial binding residue" evidence="2">
    <location>
        <position position="196"/>
    </location>
    <ligand>
        <name>heme b</name>
        <dbReference type="ChEBI" id="CHEBI:60344"/>
        <label>b566</label>
    </ligand>
    <ligandPart>
        <name>Fe</name>
        <dbReference type="ChEBI" id="CHEBI:18248"/>
    </ligandPart>
</feature>
<feature type="binding site" evidence="2">
    <location>
        <position position="201"/>
    </location>
    <ligand>
        <name>a ubiquinone</name>
        <dbReference type="ChEBI" id="CHEBI:16389"/>
    </ligand>
</feature>
<organism>
    <name type="scientific">Delphinus capensis tropicalis</name>
    <name type="common">Arabian common dolphin</name>
    <name type="synonym">Delphinus tropicalis</name>
    <dbReference type="NCBI Taxonomy" id="103585"/>
    <lineage>
        <taxon>Eukaryota</taxon>
        <taxon>Metazoa</taxon>
        <taxon>Chordata</taxon>
        <taxon>Craniata</taxon>
        <taxon>Vertebrata</taxon>
        <taxon>Euteleostomi</taxon>
        <taxon>Mammalia</taxon>
        <taxon>Eutheria</taxon>
        <taxon>Laurasiatheria</taxon>
        <taxon>Artiodactyla</taxon>
        <taxon>Whippomorpha</taxon>
        <taxon>Cetacea</taxon>
        <taxon>Odontoceti</taxon>
        <taxon>Delphinidae</taxon>
        <taxon>Delphinus</taxon>
    </lineage>
</organism>
<evidence type="ECO:0000250" key="1"/>
<evidence type="ECO:0000250" key="2">
    <source>
        <dbReference type="UniProtKB" id="P00157"/>
    </source>
</evidence>
<evidence type="ECO:0000255" key="3">
    <source>
        <dbReference type="PROSITE-ProRule" id="PRU00967"/>
    </source>
</evidence>
<evidence type="ECO:0000255" key="4">
    <source>
        <dbReference type="PROSITE-ProRule" id="PRU00968"/>
    </source>
</evidence>
<comment type="function">
    <text evidence="2">Component of the ubiquinol-cytochrome c reductase complex (complex III or cytochrome b-c1 complex) that is part of the mitochondrial respiratory chain. The b-c1 complex mediates electron transfer from ubiquinol to cytochrome c. Contributes to the generation of a proton gradient across the mitochondrial membrane that is then used for ATP synthesis.</text>
</comment>
<comment type="cofactor">
    <cofactor evidence="2">
        <name>heme b</name>
        <dbReference type="ChEBI" id="CHEBI:60344"/>
    </cofactor>
    <text evidence="2">Binds 2 heme b groups non-covalently.</text>
</comment>
<comment type="subunit">
    <text evidence="2">The cytochrome bc1 complex contains 11 subunits: 3 respiratory subunits (MT-CYB, CYC1 and UQCRFS1), 2 core proteins (UQCRC1 and UQCRC2) and 6 low-molecular weight proteins (UQCRH/QCR6, UQCRB/QCR7, UQCRQ/QCR8, UQCR10/QCR9, UQCR11/QCR10 and a cleavage product of UQCRFS1). This cytochrome bc1 complex then forms a dimer.</text>
</comment>
<comment type="subcellular location">
    <subcellularLocation>
        <location evidence="2">Mitochondrion inner membrane</location>
        <topology evidence="2">Multi-pass membrane protein</topology>
    </subcellularLocation>
</comment>
<comment type="miscellaneous">
    <text evidence="1">Heme 1 (or BL or b562) is low-potential and absorbs at about 562 nm, and heme 2 (or BH or b566) is high-potential and absorbs at about 566 nm.</text>
</comment>
<comment type="similarity">
    <text evidence="3 4">Belongs to the cytochrome b family.</text>
</comment>
<comment type="caution">
    <text evidence="2">The full-length protein contains only eight transmembrane helices, not nine as predicted by bioinformatics tools.</text>
</comment>
<protein>
    <recommendedName>
        <fullName>Cytochrome b</fullName>
    </recommendedName>
    <alternativeName>
        <fullName>Complex III subunit 3</fullName>
    </alternativeName>
    <alternativeName>
        <fullName>Complex III subunit III</fullName>
    </alternativeName>
    <alternativeName>
        <fullName>Cytochrome b-c1 complex subunit 3</fullName>
    </alternativeName>
    <alternativeName>
        <fullName>Ubiquinol-cytochrome-c reductase complex cytochrome b subunit</fullName>
    </alternativeName>
</protein>
<geneLocation type="mitochondrion"/>
<sequence>MTNIRKTHPLMKILNDAFIDLPTPSNISSWWNFGSLLGLCLIMQILTGLFLAMHYTPDTSTAFSSVAHICRDVNYGWFIRYLHANGASMFFICLYAHIGRGLYYGSYMFQETWNIGVLLLLTVMATAFVGYVLPWGQMSFWGATVITNLLSAIPYIGTTLVEWIWGGFSVDKATLTRFFAFHFILPFIITALAAVHLLFLHETGSNNPTGIPSNMDMIPFHPYYTIKDILGALLLILTLLALTLFTPDLLGDPDNYTPANPLSTPAHIKPEWYFLFAYAILRSIPNKLGGVLALLLSILILIFIPMLQTSKQRSMMFRPFSQLLFWTLVADLLTLTWIGGQPVEHPYIIVGQLASILYFLLILVLMPTAGLIENKLLKW</sequence>